<dbReference type="EMBL" id="AY254038">
    <property type="protein sequence ID" value="AAP80382.1"/>
    <property type="molecule type" value="mRNA"/>
</dbReference>
<dbReference type="EMBL" id="AY885245">
    <property type="protein sequence ID" value="AAX11223.1"/>
    <property type="molecule type" value="mRNA"/>
</dbReference>
<dbReference type="EMBL" id="AY560888">
    <property type="protein sequence ID" value="AAT44955.1"/>
    <property type="molecule type" value="mRNA"/>
</dbReference>
<dbReference type="EMBL" id="AL132971">
    <property type="protein sequence ID" value="CAB81797.1"/>
    <property type="status" value="ALT_SEQ"/>
    <property type="molecule type" value="Genomic_DNA"/>
</dbReference>
<dbReference type="EMBL" id="AL132971">
    <property type="protein sequence ID" value="CAB81798.1"/>
    <property type="status" value="ALT_SEQ"/>
    <property type="molecule type" value="Genomic_DNA"/>
</dbReference>
<dbReference type="EMBL" id="CP002686">
    <property type="protein sequence ID" value="AEE79213.1"/>
    <property type="molecule type" value="Genomic_DNA"/>
</dbReference>
<dbReference type="EMBL" id="CP002686">
    <property type="protein sequence ID" value="AEE79215.1"/>
    <property type="molecule type" value="Genomic_DNA"/>
</dbReference>
<dbReference type="PIR" id="T47591">
    <property type="entry name" value="T47591"/>
</dbReference>
<dbReference type="PIR" id="T47592">
    <property type="entry name" value="T47592"/>
</dbReference>
<dbReference type="RefSeq" id="NP_001030857.1">
    <molecule id="Q6X5Y6-1"/>
    <property type="nucleotide sequence ID" value="NM_001035780.3"/>
</dbReference>
<dbReference type="RefSeq" id="NP_191000.3">
    <molecule id="Q6X5Y6-3"/>
    <property type="nucleotide sequence ID" value="NM_115292.4"/>
</dbReference>
<dbReference type="PDB" id="7WQ5">
    <property type="method" value="X-ray"/>
    <property type="resolution" value="2.35 A"/>
    <property type="chains" value="A/B=58-307"/>
</dbReference>
<dbReference type="PDBsum" id="7WQ5"/>
<dbReference type="SMR" id="Q6X5Y6"/>
<dbReference type="BioGRID" id="9916">
    <property type="interactions" value="7"/>
</dbReference>
<dbReference type="FunCoup" id="Q6X5Y6">
    <property type="interactions" value="327"/>
</dbReference>
<dbReference type="STRING" id="3702.Q6X5Y6"/>
<dbReference type="iPTMnet" id="Q6X5Y6"/>
<dbReference type="PaxDb" id="3702-AT3G54320.1"/>
<dbReference type="EnsemblPlants" id="AT3G54320.1">
    <molecule id="Q6X5Y6-3"/>
    <property type="protein sequence ID" value="AT3G54320.1"/>
    <property type="gene ID" value="AT3G54320"/>
</dbReference>
<dbReference type="EnsemblPlants" id="AT3G54320.3">
    <molecule id="Q6X5Y6-1"/>
    <property type="protein sequence ID" value="AT3G54320.3"/>
    <property type="gene ID" value="AT3G54320"/>
</dbReference>
<dbReference type="GeneID" id="824599"/>
<dbReference type="Gramene" id="AT3G54320.1">
    <molecule id="Q6X5Y6-3"/>
    <property type="protein sequence ID" value="AT3G54320.1"/>
    <property type="gene ID" value="AT3G54320"/>
</dbReference>
<dbReference type="Gramene" id="AT3G54320.3">
    <molecule id="Q6X5Y6-1"/>
    <property type="protein sequence ID" value="AT3G54320.3"/>
    <property type="gene ID" value="AT3G54320"/>
</dbReference>
<dbReference type="KEGG" id="ath:AT3G54320"/>
<dbReference type="Araport" id="AT3G54320"/>
<dbReference type="TAIR" id="AT3G54320">
    <property type="gene designation" value="WRI1"/>
</dbReference>
<dbReference type="eggNOG" id="ENOG502QQW2">
    <property type="taxonomic scope" value="Eukaryota"/>
</dbReference>
<dbReference type="HOGENOM" id="CLU_048809_0_0_1"/>
<dbReference type="InParanoid" id="Q6X5Y6"/>
<dbReference type="OrthoDB" id="207175at2759"/>
<dbReference type="PhylomeDB" id="Q6X5Y6"/>
<dbReference type="PRO" id="PR:Q6X5Y6"/>
<dbReference type="Proteomes" id="UP000006548">
    <property type="component" value="Chromosome 3"/>
</dbReference>
<dbReference type="ExpressionAtlas" id="Q6X5Y6">
    <property type="expression patterns" value="baseline and differential"/>
</dbReference>
<dbReference type="GO" id="GO:0005634">
    <property type="term" value="C:nucleus"/>
    <property type="evidence" value="ECO:0007669"/>
    <property type="project" value="UniProtKB-SubCell"/>
</dbReference>
<dbReference type="GO" id="GO:0003677">
    <property type="term" value="F:DNA binding"/>
    <property type="evidence" value="ECO:0000314"/>
    <property type="project" value="TAIR"/>
</dbReference>
<dbReference type="GO" id="GO:0003700">
    <property type="term" value="F:DNA-binding transcription factor activity"/>
    <property type="evidence" value="ECO:0000250"/>
    <property type="project" value="TAIR"/>
</dbReference>
<dbReference type="GO" id="GO:0019900">
    <property type="term" value="F:kinase binding"/>
    <property type="evidence" value="ECO:0000353"/>
    <property type="project" value="UniProtKB"/>
</dbReference>
<dbReference type="GO" id="GO:0009873">
    <property type="term" value="P:ethylene-activated signaling pathway"/>
    <property type="evidence" value="ECO:0007669"/>
    <property type="project" value="UniProtKB-KW"/>
</dbReference>
<dbReference type="GO" id="GO:0008610">
    <property type="term" value="P:lipid biosynthetic process"/>
    <property type="evidence" value="ECO:0000315"/>
    <property type="project" value="TAIR"/>
</dbReference>
<dbReference type="GO" id="GO:0006629">
    <property type="term" value="P:lipid metabolic process"/>
    <property type="evidence" value="ECO:0000315"/>
    <property type="project" value="TAIR"/>
</dbReference>
<dbReference type="GO" id="GO:1901959">
    <property type="term" value="P:positive regulation of cutin biosynthetic process"/>
    <property type="evidence" value="ECO:0000316"/>
    <property type="project" value="TAIR"/>
</dbReference>
<dbReference type="GO" id="GO:0006109">
    <property type="term" value="P:regulation of carbohydrate metabolic process"/>
    <property type="evidence" value="ECO:0000315"/>
    <property type="project" value="TAIR"/>
</dbReference>
<dbReference type="GO" id="GO:0006110">
    <property type="term" value="P:regulation of glycolytic process"/>
    <property type="evidence" value="ECO:0000315"/>
    <property type="project" value="TAIR"/>
</dbReference>
<dbReference type="GO" id="GO:0009744">
    <property type="term" value="P:response to sucrose"/>
    <property type="evidence" value="ECO:0000270"/>
    <property type="project" value="TAIR"/>
</dbReference>
<dbReference type="GO" id="GO:0019432">
    <property type="term" value="P:triglyceride biosynthetic process"/>
    <property type="evidence" value="ECO:0000315"/>
    <property type="project" value="TAIR"/>
</dbReference>
<dbReference type="CDD" id="cd00018">
    <property type="entry name" value="AP2"/>
    <property type="match status" value="2"/>
</dbReference>
<dbReference type="FunFam" id="3.30.730.10:FF:000002">
    <property type="entry name" value="AP2-like ethylene-responsive transcription factor"/>
    <property type="match status" value="1"/>
</dbReference>
<dbReference type="FunFam" id="3.30.730.10:FF:000004">
    <property type="entry name" value="AP2-like ethylene-responsive transcription factor"/>
    <property type="match status" value="1"/>
</dbReference>
<dbReference type="Gene3D" id="3.30.730.10">
    <property type="entry name" value="AP2/ERF domain"/>
    <property type="match status" value="2"/>
</dbReference>
<dbReference type="InterPro" id="IPR001471">
    <property type="entry name" value="AP2/ERF_dom"/>
</dbReference>
<dbReference type="InterPro" id="IPR036955">
    <property type="entry name" value="AP2/ERF_dom_sf"/>
</dbReference>
<dbReference type="InterPro" id="IPR016177">
    <property type="entry name" value="DNA-bd_dom_sf"/>
</dbReference>
<dbReference type="PANTHER" id="PTHR32467">
    <property type="entry name" value="AP2-LIKE ETHYLENE-RESPONSIVE TRANSCRIPTION FACTOR"/>
    <property type="match status" value="1"/>
</dbReference>
<dbReference type="PANTHER" id="PTHR32467:SF97">
    <property type="entry name" value="ETHYLENE-RESPONSIVE TRANSCRIPTION FACTOR WRI1"/>
    <property type="match status" value="1"/>
</dbReference>
<dbReference type="Pfam" id="PF00847">
    <property type="entry name" value="AP2"/>
    <property type="match status" value="2"/>
</dbReference>
<dbReference type="PRINTS" id="PR00367">
    <property type="entry name" value="ETHRSPELEMNT"/>
</dbReference>
<dbReference type="SMART" id="SM00380">
    <property type="entry name" value="AP2"/>
    <property type="match status" value="2"/>
</dbReference>
<dbReference type="SUPFAM" id="SSF54171">
    <property type="entry name" value="DNA-binding domain"/>
    <property type="match status" value="2"/>
</dbReference>
<dbReference type="PROSITE" id="PS51032">
    <property type="entry name" value="AP2_ERF"/>
    <property type="match status" value="2"/>
</dbReference>
<organism>
    <name type="scientific">Arabidopsis thaliana</name>
    <name type="common">Mouse-ear cress</name>
    <dbReference type="NCBI Taxonomy" id="3702"/>
    <lineage>
        <taxon>Eukaryota</taxon>
        <taxon>Viridiplantae</taxon>
        <taxon>Streptophyta</taxon>
        <taxon>Embryophyta</taxon>
        <taxon>Tracheophyta</taxon>
        <taxon>Spermatophyta</taxon>
        <taxon>Magnoliopsida</taxon>
        <taxon>eudicotyledons</taxon>
        <taxon>Gunneridae</taxon>
        <taxon>Pentapetalae</taxon>
        <taxon>rosids</taxon>
        <taxon>malvids</taxon>
        <taxon>Brassicales</taxon>
        <taxon>Brassicaceae</taxon>
        <taxon>Camelineae</taxon>
        <taxon>Arabidopsis</taxon>
    </lineage>
</organism>
<comment type="function">
    <text evidence="1 4 5 6 7 8 10">May be involved in the regulation of gene expression by stress factors and by components of stress signal transduction pathways (By similarity). Transcriptional activator involved in the activation of a subset of sugar-responsive genes and the control of carbon flow from sucrose import to oil accumulation in developing seeds. Binds to the GCC-box pathogenesis-related promoter element. Promotes sugar uptake and seed oil accumulation by glycolysis. Required for embryo development, seed germination and, indirectly, for seedling establishment. Negative regulator of the ABA-mediated germination inhibition.</text>
</comment>
<comment type="activity regulation">
    <text evidence="9">Down-regulated by KIN10 that controls its protein stability under a phosphorylation-dependent manner.</text>
</comment>
<comment type="subunit">
    <text evidence="9">Interacts with KIN10 and KIN11.</text>
</comment>
<comment type="subcellular location">
    <subcellularLocation>
        <location evidence="12">Nucleus</location>
    </subcellularLocation>
</comment>
<comment type="alternative products">
    <event type="alternative splicing"/>
    <isoform>
        <id>Q6X5Y6-1</id>
        <name>1</name>
        <sequence type="displayed"/>
    </isoform>
    <isoform>
        <id>Q6X5Y6-2</id>
        <name>2</name>
        <sequence type="described" ref="VSP_027415 VSP_027416"/>
    </isoform>
    <isoform>
        <id>Q6X5Y6-3</id>
        <name>3</name>
        <sequence type="described" ref="VSP_027417"/>
    </isoform>
</comment>
<comment type="tissue specificity">
    <text evidence="5 6">Mostly expressed in siliques, especially in seeds. Also detected in roots and flowers, and, to a lower extent, in leaves stems and seedlings.</text>
</comment>
<comment type="induction">
    <text evidence="6">Transiantly in leaves by sucrose, but not by abscisic acid (ABA).</text>
</comment>
<comment type="PTM">
    <text evidence="9">Ubiquitinated.</text>
</comment>
<comment type="PTM">
    <text evidence="9">The phosphorylation at Thr-70 and Ser-166 by KIN10 facilitates its degradation via the proteasomal pathway.</text>
</comment>
<comment type="similarity">
    <text evidence="12">Belongs to the AP2/ERF transcription factor family. AP2 subfamily.</text>
</comment>
<comment type="sequence caution" evidence="12">
    <conflict type="erroneous gene model prediction">
        <sequence resource="EMBL-CDS" id="CAB81797"/>
    </conflict>
</comment>
<comment type="sequence caution" evidence="12">
    <conflict type="erroneous gene model prediction">
        <sequence resource="EMBL-CDS" id="CAB81798"/>
    </conflict>
</comment>
<feature type="chain" id="PRO_0000297946" description="Ethylene-responsive transcription factor WRI1">
    <location>
        <begin position="1"/>
        <end position="430"/>
    </location>
</feature>
<feature type="DNA-binding region" description="AP2/ERF 1" evidence="2">
    <location>
        <begin position="65"/>
        <end position="131"/>
    </location>
</feature>
<feature type="DNA-binding region" description="AP2/ERF 2" evidence="2">
    <location>
        <begin position="167"/>
        <end position="225"/>
    </location>
</feature>
<feature type="region of interest" description="Disordered" evidence="3">
    <location>
        <begin position="1"/>
        <end position="66"/>
    </location>
</feature>
<feature type="region of interest" description="Disordered" evidence="3">
    <location>
        <begin position="260"/>
        <end position="297"/>
    </location>
</feature>
<feature type="region of interest" description="Disordered" evidence="3">
    <location>
        <begin position="398"/>
        <end position="422"/>
    </location>
</feature>
<feature type="compositionally biased region" description="Low complexity" evidence="3">
    <location>
        <begin position="1"/>
        <end position="26"/>
    </location>
</feature>
<feature type="compositionally biased region" description="Polar residues" evidence="3">
    <location>
        <begin position="53"/>
        <end position="63"/>
    </location>
</feature>
<feature type="compositionally biased region" description="Basic and acidic residues" evidence="3">
    <location>
        <begin position="260"/>
        <end position="274"/>
    </location>
</feature>
<feature type="modified residue" description="Phosphothreonine; by KIN10" evidence="9">
    <location>
        <position position="70"/>
    </location>
</feature>
<feature type="modified residue" description="Phosphoserine; by KIN10" evidence="9">
    <location>
        <position position="166"/>
    </location>
</feature>
<feature type="splice variant" id="VSP_027415" description="In isoform 2." evidence="11">
    <original>NTQEEAAAAY</original>
    <variation>STLSPFPFFF</variation>
    <location>
        <begin position="199"/>
        <end position="208"/>
    </location>
</feature>
<feature type="splice variant" id="VSP_027416" description="In isoform 2." evidence="11">
    <location>
        <begin position="209"/>
        <end position="430"/>
    </location>
</feature>
<feature type="splice variant" id="VSP_027417" description="In isoform 3." evidence="12">
    <original>V</original>
    <variation>FQGLFVGSE</variation>
    <location>
        <position position="430"/>
    </location>
</feature>
<feature type="mutagenesis site" description="Favorises its stability; when associated with R-3." evidence="9">
    <original>K</original>
    <variation>R</variation>
    <location>
        <position position="2"/>
    </location>
</feature>
<feature type="mutagenesis site" description="Favorises its stability; when associated with R-2." evidence="9">
    <original>K</original>
    <variation>R</variation>
    <location>
        <position position="3"/>
    </location>
</feature>
<feature type="mutagenesis site" description="Loss of KIN10-dependent phosphorylation; when associated with A-166." evidence="9">
    <original>T</original>
    <variation>A</variation>
    <location>
        <position position="70"/>
    </location>
</feature>
<feature type="mutagenesis site" description="Loss of KIN10-dependent phosphorylation; when associated with A-70." evidence="9">
    <original>S</original>
    <variation>A</variation>
    <location>
        <position position="166"/>
    </location>
</feature>
<feature type="strand" evidence="13">
    <location>
        <begin position="69"/>
        <end position="71"/>
    </location>
</feature>
<feature type="turn" evidence="13">
    <location>
        <begin position="73"/>
        <end position="75"/>
    </location>
</feature>
<feature type="strand" evidence="13">
    <location>
        <begin position="78"/>
        <end position="88"/>
    </location>
</feature>
<feature type="strand" evidence="13">
    <location>
        <begin position="90"/>
        <end position="106"/>
    </location>
</feature>
<feature type="helix" evidence="13">
    <location>
        <begin position="107"/>
        <end position="122"/>
    </location>
</feature>
<feature type="helix" evidence="13">
    <location>
        <begin position="132"/>
        <end position="135"/>
    </location>
</feature>
<feature type="helix" evidence="13">
    <location>
        <begin position="136"/>
        <end position="143"/>
    </location>
</feature>
<feature type="helix" evidence="13">
    <location>
        <begin position="147"/>
        <end position="156"/>
    </location>
</feature>
<feature type="strand" evidence="13">
    <location>
        <begin position="164"/>
        <end position="168"/>
    </location>
</feature>
<feature type="strand" evidence="13">
    <location>
        <begin position="171"/>
        <end position="174"/>
    </location>
</feature>
<feature type="turn" evidence="13">
    <location>
        <begin position="175"/>
        <end position="178"/>
    </location>
</feature>
<feature type="strand" evidence="13">
    <location>
        <begin position="179"/>
        <end position="186"/>
    </location>
</feature>
<feature type="turn" evidence="13">
    <location>
        <begin position="187"/>
        <end position="190"/>
    </location>
</feature>
<feature type="strand" evidence="13">
    <location>
        <begin position="191"/>
        <end position="200"/>
    </location>
</feature>
<feature type="helix" evidence="13">
    <location>
        <begin position="201"/>
        <end position="216"/>
    </location>
</feature>
<feature type="helix" evidence="13">
    <location>
        <begin position="226"/>
        <end position="229"/>
    </location>
</feature>
<evidence type="ECO:0000250" key="1"/>
<evidence type="ECO:0000255" key="2">
    <source>
        <dbReference type="PROSITE-ProRule" id="PRU00366"/>
    </source>
</evidence>
<evidence type="ECO:0000256" key="3">
    <source>
        <dbReference type="SAM" id="MobiDB-lite"/>
    </source>
</evidence>
<evidence type="ECO:0000269" key="4">
    <source>
    </source>
</evidence>
<evidence type="ECO:0000269" key="5">
    <source>
    </source>
</evidence>
<evidence type="ECO:0000269" key="6">
    <source>
    </source>
</evidence>
<evidence type="ECO:0000269" key="7">
    <source>
    </source>
</evidence>
<evidence type="ECO:0000269" key="8">
    <source>
    </source>
</evidence>
<evidence type="ECO:0000269" key="9">
    <source>
    </source>
</evidence>
<evidence type="ECO:0000269" key="10">
    <source>
    </source>
</evidence>
<evidence type="ECO:0000303" key="11">
    <source ref="3"/>
</evidence>
<evidence type="ECO:0000305" key="12"/>
<evidence type="ECO:0007829" key="13">
    <source>
        <dbReference type="PDB" id="7WQ5"/>
    </source>
</evidence>
<gene>
    <name type="primary">WRI1</name>
    <name type="synonym">ASML1</name>
    <name type="ordered locus">At3g54320</name>
    <name type="ORF">T12E18.10</name>
    <name type="ORF">T12E18.20</name>
</gene>
<name>WRI1_ARATH</name>
<keyword id="KW-0002">3D-structure</keyword>
<keyword id="KW-0010">Activator</keyword>
<keyword id="KW-0025">Alternative splicing</keyword>
<keyword id="KW-0238">DNA-binding</keyword>
<keyword id="KW-0936">Ethylene signaling pathway</keyword>
<keyword id="KW-0539">Nucleus</keyword>
<keyword id="KW-0597">Phosphoprotein</keyword>
<keyword id="KW-1185">Reference proteome</keyword>
<keyword id="KW-0677">Repeat</keyword>
<keyword id="KW-0804">Transcription</keyword>
<keyword id="KW-0805">Transcription regulation</keyword>
<keyword id="KW-0832">Ubl conjugation</keyword>
<reference key="1">
    <citation type="journal article" date="2004" name="Plant J.">
        <title>WRINKLED1 encodes an AP2/EREB domain protein involved in the control of storage compound biosynthesis in Arabidopsis.</title>
        <authorList>
            <person name="Cernac A."/>
            <person name="Benning C."/>
        </authorList>
    </citation>
    <scope>NUCLEOTIDE SEQUENCE [MRNA] (ISOFORM 1)</scope>
    <scope>FUNCTION</scope>
    <scope>TISSUE SPECIFICITY</scope>
    <source>
        <strain>cv. Col-2</strain>
    </source>
</reference>
<reference key="2">
    <citation type="journal article" date="2005" name="Plant Cell Physiol.">
        <title>ACTIVATOR of Spomin::LUC1/WRINKLED1 of Arabidopsis thaliana transactivates sugar-inducible promoters.</title>
        <authorList>
            <person name="Masaki T."/>
            <person name="Mitsui N."/>
            <person name="Tsukagoshi H."/>
            <person name="Nishii T."/>
            <person name="Morikami A."/>
            <person name="Nakamura K."/>
        </authorList>
    </citation>
    <scope>NUCLEOTIDE SEQUENCE [MRNA] (ISOFORM 1)</scope>
    <scope>FUNCTION</scope>
    <scope>TISSUE SPECIFICITY</scope>
    <scope>INDUCTION</scope>
    <source>
        <strain>cv. Columbia</strain>
    </source>
</reference>
<reference key="3">
    <citation type="submission" date="2004-02" db="EMBL/GenBank/DDBJ databases">
        <title>Molecular cloning, expression, phylogenetic and functional characterization of the Arabidopsis AP2/EREBP transcription factor family.</title>
        <authorList>
            <person name="Pan Y."/>
            <person name="Gong W."/>
            <person name="Liu D."/>
            <person name="Fu Q."/>
            <person name="Mei W.-Q."/>
            <person name="Song W.-Q."/>
            <person name="Ma L.-G."/>
            <person name="Luo J.-C."/>
            <person name="Deng X.-W."/>
            <person name="Zhu Y.-X."/>
        </authorList>
    </citation>
    <scope>NUCLEOTIDE SEQUENCE [MRNA] (ISOFORM 2)</scope>
</reference>
<reference key="4">
    <citation type="journal article" date="2000" name="Nature">
        <title>Sequence and analysis of chromosome 3 of the plant Arabidopsis thaliana.</title>
        <authorList>
            <person name="Salanoubat M."/>
            <person name="Lemcke K."/>
            <person name="Rieger M."/>
            <person name="Ansorge W."/>
            <person name="Unseld M."/>
            <person name="Fartmann B."/>
            <person name="Valle G."/>
            <person name="Bloecker H."/>
            <person name="Perez-Alonso M."/>
            <person name="Obermaier B."/>
            <person name="Delseny M."/>
            <person name="Boutry M."/>
            <person name="Grivell L.A."/>
            <person name="Mache R."/>
            <person name="Puigdomenech P."/>
            <person name="De Simone V."/>
            <person name="Choisne N."/>
            <person name="Artiguenave F."/>
            <person name="Robert C."/>
            <person name="Brottier P."/>
            <person name="Wincker P."/>
            <person name="Cattolico L."/>
            <person name="Weissenbach J."/>
            <person name="Saurin W."/>
            <person name="Quetier F."/>
            <person name="Schaefer M."/>
            <person name="Mueller-Auer S."/>
            <person name="Gabel C."/>
            <person name="Fuchs M."/>
            <person name="Benes V."/>
            <person name="Wurmbach E."/>
            <person name="Drzonek H."/>
            <person name="Erfle H."/>
            <person name="Jordan N."/>
            <person name="Bangert S."/>
            <person name="Wiedelmann R."/>
            <person name="Kranz H."/>
            <person name="Voss H."/>
            <person name="Holland R."/>
            <person name="Brandt P."/>
            <person name="Nyakatura G."/>
            <person name="Vezzi A."/>
            <person name="D'Angelo M."/>
            <person name="Pallavicini A."/>
            <person name="Toppo S."/>
            <person name="Simionati B."/>
            <person name="Conrad A."/>
            <person name="Hornischer K."/>
            <person name="Kauer G."/>
            <person name="Loehnert T.-H."/>
            <person name="Nordsiek G."/>
            <person name="Reichelt J."/>
            <person name="Scharfe M."/>
            <person name="Schoen O."/>
            <person name="Bargues M."/>
            <person name="Terol J."/>
            <person name="Climent J."/>
            <person name="Navarro P."/>
            <person name="Collado C."/>
            <person name="Perez-Perez A."/>
            <person name="Ottenwaelder B."/>
            <person name="Duchemin D."/>
            <person name="Cooke R."/>
            <person name="Laudie M."/>
            <person name="Berger-Llauro C."/>
            <person name="Purnelle B."/>
            <person name="Masuy D."/>
            <person name="de Haan M."/>
            <person name="Maarse A.C."/>
            <person name="Alcaraz J.-P."/>
            <person name="Cottet A."/>
            <person name="Casacuberta E."/>
            <person name="Monfort A."/>
            <person name="Argiriou A."/>
            <person name="Flores M."/>
            <person name="Liguori R."/>
            <person name="Vitale D."/>
            <person name="Mannhaupt G."/>
            <person name="Haase D."/>
            <person name="Schoof H."/>
            <person name="Rudd S."/>
            <person name="Zaccaria P."/>
            <person name="Mewes H.-W."/>
            <person name="Mayer K.F.X."/>
            <person name="Kaul S."/>
            <person name="Town C.D."/>
            <person name="Koo H.L."/>
            <person name="Tallon L.J."/>
            <person name="Jenkins J."/>
            <person name="Rooney T."/>
            <person name="Rizzo M."/>
            <person name="Walts A."/>
            <person name="Utterback T."/>
            <person name="Fujii C.Y."/>
            <person name="Shea T.P."/>
            <person name="Creasy T.H."/>
            <person name="Haas B."/>
            <person name="Maiti R."/>
            <person name="Wu D."/>
            <person name="Peterson J."/>
            <person name="Van Aken S."/>
            <person name="Pai G."/>
            <person name="Militscher J."/>
            <person name="Sellers P."/>
            <person name="Gill J.E."/>
            <person name="Feldblyum T.V."/>
            <person name="Preuss D."/>
            <person name="Lin X."/>
            <person name="Nierman W.C."/>
            <person name="Salzberg S.L."/>
            <person name="White O."/>
            <person name="Venter J.C."/>
            <person name="Fraser C.M."/>
            <person name="Kaneko T."/>
            <person name="Nakamura Y."/>
            <person name="Sato S."/>
            <person name="Kato T."/>
            <person name="Asamizu E."/>
            <person name="Sasamoto S."/>
            <person name="Kimura T."/>
            <person name="Idesawa K."/>
            <person name="Kawashima K."/>
            <person name="Kishida Y."/>
            <person name="Kiyokawa C."/>
            <person name="Kohara M."/>
            <person name="Matsumoto M."/>
            <person name="Matsuno A."/>
            <person name="Muraki A."/>
            <person name="Nakayama S."/>
            <person name="Nakazaki N."/>
            <person name="Shinpo S."/>
            <person name="Takeuchi C."/>
            <person name="Wada T."/>
            <person name="Watanabe A."/>
            <person name="Yamada M."/>
            <person name="Yasuda M."/>
            <person name="Tabata S."/>
        </authorList>
    </citation>
    <scope>NUCLEOTIDE SEQUENCE [LARGE SCALE GENOMIC DNA]</scope>
    <source>
        <strain>cv. Columbia</strain>
    </source>
</reference>
<reference key="5">
    <citation type="journal article" date="2017" name="Plant J.">
        <title>Araport11: a complete reannotation of the Arabidopsis thaliana reference genome.</title>
        <authorList>
            <person name="Cheng C.Y."/>
            <person name="Krishnakumar V."/>
            <person name="Chan A.P."/>
            <person name="Thibaud-Nissen F."/>
            <person name="Schobel S."/>
            <person name="Town C.D."/>
        </authorList>
    </citation>
    <scope>GENOME REANNOTATION</scope>
    <source>
        <strain>cv. Columbia</strain>
    </source>
</reference>
<reference key="6">
    <citation type="journal article" date="1998" name="Plant Physiol.">
        <title>wrinkled1: A novel, low-seed-oil mutant of Arabidopsis with a deficiency in the seed-specific regulation of carbohydrate metabolism.</title>
        <authorList>
            <person name="Focks N."/>
            <person name="Benning C."/>
        </authorList>
    </citation>
    <scope>FUNCTION</scope>
</reference>
<reference key="7">
    <citation type="journal article" date="2002" name="Plant Cell">
        <title>Contrapuntal networks of gene expression during Arabidopsis seed filling.</title>
        <authorList>
            <person name="Ruuska S.A."/>
            <person name="Girke T."/>
            <person name="Benning C."/>
            <person name="Ohlrogge J.B."/>
        </authorList>
    </citation>
    <scope>FUNCTION</scope>
</reference>
<reference key="8">
    <citation type="journal article" date="2006" name="Plant J.">
        <title>A spatiotemporal analysis of enzymatic activities associated with carbon metabolism in wild-type and mutant embryos of Arabidopsis using in situ histochemistry.</title>
        <authorList>
            <person name="Baud S."/>
            <person name="Graham I.A."/>
        </authorList>
    </citation>
    <scope>FUNCTION</scope>
</reference>
<reference key="9">
    <citation type="journal article" date="2006" name="Plant Physiol.">
        <title>WRI1 is required for seed germination and seedling establishment.</title>
        <authorList>
            <person name="Cernac A."/>
            <person name="Andre C."/>
            <person name="Hoffmann-Benning S."/>
            <person name="Benning C."/>
        </authorList>
    </citation>
    <scope>FUNCTION</scope>
</reference>
<reference key="10">
    <citation type="journal article" date="2006" name="Plant Physiol.">
        <title>Genome-wide analysis of the ERF gene family in Arabidopsis and rice.</title>
        <authorList>
            <person name="Nakano T."/>
            <person name="Suzuki K."/>
            <person name="Fujimura T."/>
            <person name="Shinshi H."/>
        </authorList>
    </citation>
    <scope>GENE FAMILY</scope>
    <scope>NOMENCLATURE</scope>
</reference>
<reference key="11">
    <citation type="journal article" date="2017" name="Plant Cell">
        <title>Phosphorylation of WRINKLED1 by KIN10 results in its proteasomal degradation, providing a link between energy homeostasis and lipid biosynthesis.</title>
        <authorList>
            <person name="Zhai Z."/>
            <person name="Liu H."/>
            <person name="Shanklin J."/>
        </authorList>
    </citation>
    <scope>ACTIVITY REGULATION</scope>
    <scope>MUTAGENESIS OF LYS-2; LYS-3; THR-70 AND SER-166</scope>
    <scope>UBIQUITINATION</scope>
    <scope>INTERACTION WITH KIN10 AND KIN11</scope>
    <scope>PHOSPHORYLATION AT THR-70 AND SER-166</scope>
    <scope>IDENTIFICATION BY MASS SPECTROMETRY</scope>
</reference>
<protein>
    <recommendedName>
        <fullName>Ethylene-responsive transcription factor WRI1</fullName>
    </recommendedName>
    <alternativeName>
        <fullName>Protein ACTIVATOR OF SPORAMIN::LUC 1</fullName>
    </alternativeName>
    <alternativeName>
        <fullName>Protein WRINKLED 1</fullName>
    </alternativeName>
</protein>
<sequence>MKKRLTTSTCSSSPSSSVSSSTTTSSPIQSEAPRPKRAKRAKKSSPSGDKSHNPTSPASTRRSSIYRGVTRHRWTGRFEAHLWDKSSWNSIQNKKGKQVYLGAYDSEEAAAHTYDLAALKYWGPDTILNFPAETYTKELEEMQRVTKEEYLASLRRQSSGFSRGVSKYRGVARHHHNGRWEARIGRVFGNKYLYLGTYNTQEEAAAAYDMAAIEYRGANAVTNFDISNYIDRLKKKGVFPFPVNQANHQEGILVEAKQEVETREAKEEPREEVKQQYVEEPPQEEEEKEEEKAEQQEAEIVGYSEEAAVVNCCIDSSTIMEMDRCGDNNELAWNFCMMDTGFSPFLTDQNLANENPIEYPELFNELAFEDNIDFMFDDGKHECLNLENLDCCVVGRESPPSSSSPLSCLSTDSASSTTTTTTSVSCNYLV</sequence>
<proteinExistence type="evidence at protein level"/>
<accession>Q6X5Y6</accession>
<accession>Q2V3P6</accession>
<accession>Q6J9N7</accession>
<accession>Q9M2V3</accession>
<accession>Q9M2V4</accession>